<organism>
    <name type="scientific">Granulibacter bethesdensis (strain ATCC BAA-1260 / CGDNIH1)</name>
    <dbReference type="NCBI Taxonomy" id="391165"/>
    <lineage>
        <taxon>Bacteria</taxon>
        <taxon>Pseudomonadati</taxon>
        <taxon>Pseudomonadota</taxon>
        <taxon>Alphaproteobacteria</taxon>
        <taxon>Acetobacterales</taxon>
        <taxon>Acetobacteraceae</taxon>
        <taxon>Granulibacter</taxon>
    </lineage>
</organism>
<dbReference type="EC" id="7.3.2.5" evidence="1"/>
<dbReference type="EMBL" id="CP000394">
    <property type="protein sequence ID" value="ABI63022.1"/>
    <property type="status" value="ALT_INIT"/>
    <property type="molecule type" value="Genomic_DNA"/>
</dbReference>
<dbReference type="SMR" id="Q0BQ80"/>
<dbReference type="STRING" id="391165.GbCGDNIH1_2124"/>
<dbReference type="KEGG" id="gbe:GbCGDNIH1_2124"/>
<dbReference type="eggNOG" id="COG4148">
    <property type="taxonomic scope" value="Bacteria"/>
</dbReference>
<dbReference type="HOGENOM" id="CLU_000604_1_1_5"/>
<dbReference type="OrthoDB" id="9802264at2"/>
<dbReference type="Proteomes" id="UP000001963">
    <property type="component" value="Chromosome"/>
</dbReference>
<dbReference type="GO" id="GO:0005886">
    <property type="term" value="C:plasma membrane"/>
    <property type="evidence" value="ECO:0007669"/>
    <property type="project" value="UniProtKB-SubCell"/>
</dbReference>
<dbReference type="GO" id="GO:0015412">
    <property type="term" value="F:ABC-type molybdate transporter activity"/>
    <property type="evidence" value="ECO:0007669"/>
    <property type="project" value="UniProtKB-EC"/>
</dbReference>
<dbReference type="GO" id="GO:0005524">
    <property type="term" value="F:ATP binding"/>
    <property type="evidence" value="ECO:0007669"/>
    <property type="project" value="UniProtKB-KW"/>
</dbReference>
<dbReference type="GO" id="GO:0016887">
    <property type="term" value="F:ATP hydrolysis activity"/>
    <property type="evidence" value="ECO:0007669"/>
    <property type="project" value="InterPro"/>
</dbReference>
<dbReference type="Gene3D" id="2.40.50.100">
    <property type="match status" value="1"/>
</dbReference>
<dbReference type="Gene3D" id="3.40.50.300">
    <property type="entry name" value="P-loop containing nucleotide triphosphate hydrolases"/>
    <property type="match status" value="1"/>
</dbReference>
<dbReference type="InterPro" id="IPR003593">
    <property type="entry name" value="AAA+_ATPase"/>
</dbReference>
<dbReference type="InterPro" id="IPR003439">
    <property type="entry name" value="ABC_transporter-like_ATP-bd"/>
</dbReference>
<dbReference type="InterPro" id="IPR017871">
    <property type="entry name" value="ABC_transporter-like_CS"/>
</dbReference>
<dbReference type="InterPro" id="IPR008995">
    <property type="entry name" value="Mo/tungstate-bd_C_term_dom"/>
</dbReference>
<dbReference type="InterPro" id="IPR011868">
    <property type="entry name" value="ModC_ABC_ATP-bd"/>
</dbReference>
<dbReference type="InterPro" id="IPR050334">
    <property type="entry name" value="Molybdenum_import_ModC"/>
</dbReference>
<dbReference type="InterPro" id="IPR004606">
    <property type="entry name" value="Mop_domain"/>
</dbReference>
<dbReference type="InterPro" id="IPR027417">
    <property type="entry name" value="P-loop_NTPase"/>
</dbReference>
<dbReference type="InterPro" id="IPR005116">
    <property type="entry name" value="Transp-assoc_OB_typ1"/>
</dbReference>
<dbReference type="NCBIfam" id="TIGR02142">
    <property type="entry name" value="modC_ABC"/>
    <property type="match status" value="1"/>
</dbReference>
<dbReference type="PANTHER" id="PTHR43514">
    <property type="entry name" value="ABC TRANSPORTER I FAMILY MEMBER 10"/>
    <property type="match status" value="1"/>
</dbReference>
<dbReference type="PANTHER" id="PTHR43514:SF4">
    <property type="entry name" value="ABC TRANSPORTER I FAMILY MEMBER 10"/>
    <property type="match status" value="1"/>
</dbReference>
<dbReference type="Pfam" id="PF00005">
    <property type="entry name" value="ABC_tran"/>
    <property type="match status" value="1"/>
</dbReference>
<dbReference type="Pfam" id="PF03459">
    <property type="entry name" value="TOBE"/>
    <property type="match status" value="1"/>
</dbReference>
<dbReference type="SMART" id="SM00382">
    <property type="entry name" value="AAA"/>
    <property type="match status" value="1"/>
</dbReference>
<dbReference type="SUPFAM" id="SSF50331">
    <property type="entry name" value="MOP-like"/>
    <property type="match status" value="1"/>
</dbReference>
<dbReference type="SUPFAM" id="SSF52540">
    <property type="entry name" value="P-loop containing nucleoside triphosphate hydrolases"/>
    <property type="match status" value="1"/>
</dbReference>
<dbReference type="PROSITE" id="PS00211">
    <property type="entry name" value="ABC_TRANSPORTER_1"/>
    <property type="match status" value="1"/>
</dbReference>
<dbReference type="PROSITE" id="PS50893">
    <property type="entry name" value="ABC_TRANSPORTER_2"/>
    <property type="match status" value="1"/>
</dbReference>
<dbReference type="PROSITE" id="PS51241">
    <property type="entry name" value="MODC"/>
    <property type="match status" value="1"/>
</dbReference>
<dbReference type="PROSITE" id="PS51866">
    <property type="entry name" value="MOP"/>
    <property type="match status" value="1"/>
</dbReference>
<comment type="function">
    <text evidence="1">Part of the ABC transporter complex ModABC involved in molybdenum import. Responsible for energy coupling to the transport system.</text>
</comment>
<comment type="catalytic activity">
    <reaction evidence="1">
        <text>molybdate(out) + ATP + H2O = molybdate(in) + ADP + phosphate + H(+)</text>
        <dbReference type="Rhea" id="RHEA:22020"/>
        <dbReference type="ChEBI" id="CHEBI:15377"/>
        <dbReference type="ChEBI" id="CHEBI:15378"/>
        <dbReference type="ChEBI" id="CHEBI:30616"/>
        <dbReference type="ChEBI" id="CHEBI:36264"/>
        <dbReference type="ChEBI" id="CHEBI:43474"/>
        <dbReference type="ChEBI" id="CHEBI:456216"/>
        <dbReference type="EC" id="7.3.2.5"/>
    </reaction>
</comment>
<comment type="subunit">
    <text evidence="1">The complex is composed of two ATP-binding proteins (ModC), two transmembrane proteins (ModB) and a solute-binding protein (ModA).</text>
</comment>
<comment type="subcellular location">
    <subcellularLocation>
        <location evidence="1">Cell inner membrane</location>
        <topology evidence="1">Peripheral membrane protein</topology>
    </subcellularLocation>
</comment>
<comment type="similarity">
    <text evidence="1">Belongs to the ABC transporter superfamily. Molybdate importer (TC 3.A.1.8) family.</text>
</comment>
<comment type="sequence caution" evidence="3">
    <conflict type="erroneous initiation">
        <sequence resource="EMBL-CDS" id="ABI63022"/>
    </conflict>
</comment>
<accession>Q0BQ80</accession>
<protein>
    <recommendedName>
        <fullName evidence="1">Molybdenum import ATP-binding protein ModC</fullName>
        <ecNumber evidence="1">7.3.2.5</ecNumber>
    </recommendedName>
</protein>
<evidence type="ECO:0000255" key="1">
    <source>
        <dbReference type="HAMAP-Rule" id="MF_01705"/>
    </source>
</evidence>
<evidence type="ECO:0000255" key="2">
    <source>
        <dbReference type="PROSITE-ProRule" id="PRU01213"/>
    </source>
</evidence>
<evidence type="ECO:0000305" key="3"/>
<name>MODC_GRABC</name>
<reference key="1">
    <citation type="journal article" date="2007" name="J. Bacteriol.">
        <title>Genome sequence analysis of the emerging human pathogenic acetic acid bacterium Granulibacter bethesdensis.</title>
        <authorList>
            <person name="Greenberg D.E."/>
            <person name="Porcella S.F."/>
            <person name="Zelazny A.M."/>
            <person name="Virtaneva K."/>
            <person name="Sturdevant D.E."/>
            <person name="Kupko J.J. III"/>
            <person name="Barbian K.D."/>
            <person name="Babar A."/>
            <person name="Dorward D.W."/>
            <person name="Holland S.M."/>
        </authorList>
    </citation>
    <scope>NUCLEOTIDE SEQUENCE [LARGE SCALE GENOMIC DNA]</scope>
    <source>
        <strain>ATCC BAA-1260 / CGDNIH1</strain>
    </source>
</reference>
<proteinExistence type="inferred from homology"/>
<sequence length="367" mass="39013">MSSAALEVRLNHRFPGTEIDVCFAGRGCTVLFGPSGAGKSTIAMAVAGLMRPDHLHLRVGGLDLHDLPPERRRIGVVFQDARLFPHLSVLGNLEYGARRAPPGDFPLSGDFPLSREEIMTMLGIGALLKRRPATLSGGERQRVAIGRALLSRPHMLVMDEPLASLDQARKQDILPVLRRLKAAGLPMLYVTHALQEMAYLADDVVLLETGRVRASGSLGHISSDPALSGGFGHEAGAVLEAVVSGHMPDRGLTILSCAGTEVLVPLQALKPGTGLRVRIPAADVIVATESPGHISLHNILPVVMTDWQPAHLQGKAGTTQEALVRLALPGGHLLARVTRDAIQRLGLEPGRHVLALIKSVAVDVLGP</sequence>
<feature type="chain" id="PRO_0000271673" description="Molybdenum import ATP-binding protein ModC">
    <location>
        <begin position="1"/>
        <end position="367"/>
    </location>
</feature>
<feature type="domain" description="ABC transporter" evidence="1">
    <location>
        <begin position="1"/>
        <end position="234"/>
    </location>
</feature>
<feature type="domain" description="Mop" evidence="2">
    <location>
        <begin position="293"/>
        <end position="366"/>
    </location>
</feature>
<feature type="binding site" evidence="1">
    <location>
        <begin position="33"/>
        <end position="40"/>
    </location>
    <ligand>
        <name>ATP</name>
        <dbReference type="ChEBI" id="CHEBI:30616"/>
    </ligand>
</feature>
<keyword id="KW-0067">ATP-binding</keyword>
<keyword id="KW-0997">Cell inner membrane</keyword>
<keyword id="KW-1003">Cell membrane</keyword>
<keyword id="KW-0472">Membrane</keyword>
<keyword id="KW-0500">Molybdenum</keyword>
<keyword id="KW-0547">Nucleotide-binding</keyword>
<keyword id="KW-1185">Reference proteome</keyword>
<keyword id="KW-1278">Translocase</keyword>
<keyword id="KW-0813">Transport</keyword>
<gene>
    <name evidence="1" type="primary">modC</name>
    <name type="ordered locus">GbCGDNIH1_2124</name>
</gene>